<accession>Q320T0</accession>
<accession>Q320S9</accession>
<keyword id="KW-0342">GTP-binding</keyword>
<keyword id="KW-0349">Heme</keyword>
<keyword id="KW-0408">Iron</keyword>
<keyword id="KW-0460">Magnesium</keyword>
<keyword id="KW-0479">Metal-binding</keyword>
<keyword id="KW-0547">Nucleotide-binding</keyword>
<keyword id="KW-0808">Transferase</keyword>
<evidence type="ECO:0000250" key="1"/>
<evidence type="ECO:0000255" key="2"/>
<evidence type="ECO:0000255" key="3">
    <source>
        <dbReference type="PROSITE-ProRule" id="PRU00095"/>
    </source>
</evidence>
<evidence type="ECO:0000305" key="4"/>
<comment type="function">
    <text evidence="1">Globin-coupled heme-based oxygen sensor protein displaying diguanylate cyclase (DGC) activity in response to oxygen availability. Thus, catalyzes the synthesis of cyclic diguanylate (c-di-GMP) via the condensation of 2 GTP molecules. Cyclic-di-GMP is a second messenger which controls cell surface-associated traits in bacteria (By similarity).</text>
</comment>
<comment type="catalytic activity">
    <reaction>
        <text>2 GTP = 3',3'-c-di-GMP + 2 diphosphate</text>
        <dbReference type="Rhea" id="RHEA:24898"/>
        <dbReference type="ChEBI" id="CHEBI:33019"/>
        <dbReference type="ChEBI" id="CHEBI:37565"/>
        <dbReference type="ChEBI" id="CHEBI:58805"/>
        <dbReference type="EC" id="2.7.7.65"/>
    </reaction>
</comment>
<comment type="cofactor">
    <cofactor evidence="1">
        <name>heme</name>
        <dbReference type="ChEBI" id="CHEBI:30413"/>
    </cofactor>
    <text evidence="1">Binds 1 heme group per subunit.</text>
</comment>
<comment type="cofactor">
    <cofactor evidence="1">
        <name>Mg(2+)</name>
        <dbReference type="ChEBI" id="CHEBI:18420"/>
    </cofactor>
    <text evidence="1">Binds 1 Mg(2+) ion per subunit.</text>
</comment>
<comment type="pathway">
    <text>Purine metabolism; 3',5'-cyclic di-GMP biosynthesis.</text>
</comment>
<comment type="domain">
    <text evidence="1">Is composed of an N-terminal sensory globin-fold domain that binds heme and oxygen, and a C-terminal GGDEF diguanylate cyclase domain.</text>
</comment>
<comment type="sequence caution" evidence="4">
    <conflict type="frameshift">
        <sequence resource="EMBL-CDS" id="ABB66178"/>
    </conflict>
</comment>
<comment type="sequence caution" evidence="4">
    <conflict type="frameshift">
        <sequence resource="EMBL-CDS" id="ABB66179"/>
    </conflict>
</comment>
<reference key="1">
    <citation type="journal article" date="2005" name="Nucleic Acids Res.">
        <title>Genome dynamics and diversity of Shigella species, the etiologic agents of bacillary dysentery.</title>
        <authorList>
            <person name="Yang F."/>
            <person name="Yang J."/>
            <person name="Zhang X."/>
            <person name="Chen L."/>
            <person name="Jiang Y."/>
            <person name="Yan Y."/>
            <person name="Tang X."/>
            <person name="Wang J."/>
            <person name="Xiong Z."/>
            <person name="Dong J."/>
            <person name="Xue Y."/>
            <person name="Zhu Y."/>
            <person name="Xu X."/>
            <person name="Sun L."/>
            <person name="Chen S."/>
            <person name="Nie H."/>
            <person name="Peng J."/>
            <person name="Xu J."/>
            <person name="Wang Y."/>
            <person name="Yuan Z."/>
            <person name="Wen Y."/>
            <person name="Yao Z."/>
            <person name="Shen Y."/>
            <person name="Qiang B."/>
            <person name="Hou Y."/>
            <person name="Yu J."/>
            <person name="Jin Q."/>
        </authorList>
    </citation>
    <scope>NUCLEOTIDE SEQUENCE [LARGE SCALE GENOMIC DNA]</scope>
    <source>
        <strain>Sb227</strain>
    </source>
</reference>
<dbReference type="EC" id="2.7.7.65"/>
<dbReference type="EMBL" id="CP000036">
    <property type="protein sequence ID" value="ABB66178.1"/>
    <property type="status" value="ALT_FRAME"/>
    <property type="molecule type" value="Genomic_DNA"/>
</dbReference>
<dbReference type="EMBL" id="CP000036">
    <property type="protein sequence ID" value="ABB66179.1"/>
    <property type="status" value="ALT_FRAME"/>
    <property type="molecule type" value="Genomic_DNA"/>
</dbReference>
<dbReference type="SMR" id="Q320T0"/>
<dbReference type="KEGG" id="sbo:SBO_1566"/>
<dbReference type="KEGG" id="sbo:SBO_1567"/>
<dbReference type="HOGENOM" id="CLU_1155769_0_0_6"/>
<dbReference type="UniPathway" id="UPA00599"/>
<dbReference type="Proteomes" id="UP000007067">
    <property type="component" value="Chromosome"/>
</dbReference>
<dbReference type="GO" id="GO:0005886">
    <property type="term" value="C:plasma membrane"/>
    <property type="evidence" value="ECO:0007669"/>
    <property type="project" value="TreeGrafter"/>
</dbReference>
<dbReference type="GO" id="GO:0052621">
    <property type="term" value="F:diguanylate cyclase activity"/>
    <property type="evidence" value="ECO:0007669"/>
    <property type="project" value="UniProtKB-EC"/>
</dbReference>
<dbReference type="GO" id="GO:0005525">
    <property type="term" value="F:GTP binding"/>
    <property type="evidence" value="ECO:0007669"/>
    <property type="project" value="UniProtKB-KW"/>
</dbReference>
<dbReference type="GO" id="GO:0020037">
    <property type="term" value="F:heme binding"/>
    <property type="evidence" value="ECO:0007669"/>
    <property type="project" value="InterPro"/>
</dbReference>
<dbReference type="GO" id="GO:0046872">
    <property type="term" value="F:metal ion binding"/>
    <property type="evidence" value="ECO:0007669"/>
    <property type="project" value="UniProtKB-KW"/>
</dbReference>
<dbReference type="GO" id="GO:0019825">
    <property type="term" value="F:oxygen binding"/>
    <property type="evidence" value="ECO:0007669"/>
    <property type="project" value="InterPro"/>
</dbReference>
<dbReference type="GO" id="GO:0043709">
    <property type="term" value="P:cell adhesion involved in single-species biofilm formation"/>
    <property type="evidence" value="ECO:0007669"/>
    <property type="project" value="TreeGrafter"/>
</dbReference>
<dbReference type="GO" id="GO:1902201">
    <property type="term" value="P:negative regulation of bacterial-type flagellum-dependent cell motility"/>
    <property type="evidence" value="ECO:0007669"/>
    <property type="project" value="TreeGrafter"/>
</dbReference>
<dbReference type="CDD" id="cd01949">
    <property type="entry name" value="GGDEF"/>
    <property type="match status" value="1"/>
</dbReference>
<dbReference type="CDD" id="cd14757">
    <property type="entry name" value="GS_EcDosC-like_GGDEF"/>
    <property type="match status" value="1"/>
</dbReference>
<dbReference type="FunFam" id="3.30.70.270:FF:000001">
    <property type="entry name" value="Diguanylate cyclase domain protein"/>
    <property type="match status" value="1"/>
</dbReference>
<dbReference type="FunFam" id="1.10.490.10:FF:000007">
    <property type="entry name" value="Diguanylate cyclase DosC"/>
    <property type="match status" value="1"/>
</dbReference>
<dbReference type="Gene3D" id="3.30.70.270">
    <property type="match status" value="1"/>
</dbReference>
<dbReference type="Gene3D" id="1.10.490.10">
    <property type="entry name" value="Globins"/>
    <property type="match status" value="1"/>
</dbReference>
<dbReference type="InterPro" id="IPR050469">
    <property type="entry name" value="Diguanylate_Cyclase"/>
</dbReference>
<dbReference type="InterPro" id="IPR048442">
    <property type="entry name" value="DosC_2nd"/>
</dbReference>
<dbReference type="InterPro" id="IPR039435">
    <property type="entry name" value="DosC_GS"/>
</dbReference>
<dbReference type="InterPro" id="IPR000160">
    <property type="entry name" value="GGDEF_dom"/>
</dbReference>
<dbReference type="InterPro" id="IPR009050">
    <property type="entry name" value="Globin-like_sf"/>
</dbReference>
<dbReference type="InterPro" id="IPR044398">
    <property type="entry name" value="Globin-sensor_dom"/>
</dbReference>
<dbReference type="InterPro" id="IPR012292">
    <property type="entry name" value="Globin/Proto"/>
</dbReference>
<dbReference type="InterPro" id="IPR029787">
    <property type="entry name" value="Nucleotide_cyclase"/>
</dbReference>
<dbReference type="InterPro" id="IPR043128">
    <property type="entry name" value="Rev_trsase/Diguanyl_cyclase"/>
</dbReference>
<dbReference type="NCBIfam" id="TIGR00254">
    <property type="entry name" value="GGDEF"/>
    <property type="match status" value="1"/>
</dbReference>
<dbReference type="PANTHER" id="PTHR45138:SF9">
    <property type="entry name" value="DIGUANYLATE CYCLASE DGCM-RELATED"/>
    <property type="match status" value="1"/>
</dbReference>
<dbReference type="PANTHER" id="PTHR45138">
    <property type="entry name" value="REGULATORY COMPONENTS OF SENSORY TRANSDUCTION SYSTEM"/>
    <property type="match status" value="1"/>
</dbReference>
<dbReference type="Pfam" id="PF21118">
    <property type="entry name" value="DosC_2nd"/>
    <property type="match status" value="1"/>
</dbReference>
<dbReference type="Pfam" id="PF00990">
    <property type="entry name" value="GGDEF"/>
    <property type="match status" value="1"/>
</dbReference>
<dbReference type="Pfam" id="PF11563">
    <property type="entry name" value="Protoglobin"/>
    <property type="match status" value="1"/>
</dbReference>
<dbReference type="SMART" id="SM00267">
    <property type="entry name" value="GGDEF"/>
    <property type="match status" value="1"/>
</dbReference>
<dbReference type="SUPFAM" id="SSF46458">
    <property type="entry name" value="Globin-like"/>
    <property type="match status" value="1"/>
</dbReference>
<dbReference type="SUPFAM" id="SSF55073">
    <property type="entry name" value="Nucleotide cyclase"/>
    <property type="match status" value="1"/>
</dbReference>
<dbReference type="PROSITE" id="PS50887">
    <property type="entry name" value="GGDEF"/>
    <property type="match status" value="1"/>
</dbReference>
<gene>
    <name type="primary">dosC</name>
    <name type="ordered locus">SBO_1566/SBO_1567</name>
</gene>
<protein>
    <recommendedName>
        <fullName>Diguanylate cyclase DosC</fullName>
        <shortName>DGC</shortName>
        <ecNumber>2.7.7.65</ecNumber>
    </recommendedName>
    <alternativeName>
        <fullName>Direct oxygen-sensing cyclase</fullName>
    </alternativeName>
</protein>
<proteinExistence type="inferred from homology"/>
<feature type="chain" id="PRO_0000316154" description="Diguanylate cyclase DosC">
    <location>
        <begin position="1"/>
        <end position="460"/>
    </location>
</feature>
<feature type="domain" description="GGDEF" evidence="3">
    <location>
        <begin position="325"/>
        <end position="458"/>
    </location>
</feature>
<feature type="active site" description="Proton acceptor" evidence="2">
    <location>
        <position position="376"/>
    </location>
</feature>
<feature type="binding site" description="proximal binding residue" evidence="1">
    <location>
        <position position="98"/>
    </location>
    <ligand>
        <name>heme</name>
        <dbReference type="ChEBI" id="CHEBI:30413"/>
    </ligand>
    <ligandPart>
        <name>Fe</name>
        <dbReference type="ChEBI" id="CHEBI:18248"/>
    </ligandPart>
</feature>
<feature type="binding site" evidence="1">
    <location>
        <position position="333"/>
    </location>
    <ligand>
        <name>Mg(2+)</name>
        <dbReference type="ChEBI" id="CHEBI:18420"/>
    </ligand>
</feature>
<feature type="binding site" evidence="1">
    <location>
        <position position="341"/>
    </location>
    <ligand>
        <name>substrate</name>
    </ligand>
</feature>
<feature type="binding site" evidence="1">
    <location>
        <position position="350"/>
    </location>
    <ligand>
        <name>substrate</name>
    </ligand>
</feature>
<feature type="binding site" evidence="1">
    <location>
        <position position="376"/>
    </location>
    <ligand>
        <name>Mg(2+)</name>
        <dbReference type="ChEBI" id="CHEBI:18420"/>
    </ligand>
</feature>
<feature type="site" description="Involved in oxygen binding and important for the stability of the Fe(II)-O(2) complex" evidence="1">
    <location>
        <position position="43"/>
    </location>
</feature>
<feature type="site" description="Important for oxygen binding and stability of the Fe(II)-O(2) complex" evidence="1">
    <location>
        <position position="60"/>
    </location>
</feature>
<feature type="site" description="Critical for restricting water access to the heme distal side to avoid rapid autoxidation" evidence="1">
    <location>
        <position position="65"/>
    </location>
</feature>
<feature type="site" description="Transition state stabilizer" evidence="2">
    <location>
        <position position="338"/>
    </location>
</feature>
<sequence length="460" mass="53194">MEMYFKRMKDEWTGLVEQADPLIRAKAAEIAVAHAHYLSIEFYRIVRIDPHAEEFLSNEQVERQLKSAMERWIINVLSAQVDDVERLIQIQHTVAEVHARIGIPVEIVEMGFRVLKKILYPVIFSSDYSAAEKLQVYHFSINSIDIAMEVMTRAFTFSDSSASKEDENYRIFSLLENAEEEKERQIASILSWEIDIIYKILLDSDLGSSLPLSQADFGLWFNHKGRHYFSGIAEVGHISRLIQDFDGIFNQTMRNTRNLNNRSLRVKFLLQIRNTVSQIITLLRELFEEVSRHEVGMDVLTKLLNRRFLPTIFKREIAHANRTGTPLSVLIIDVDKFKEINDTWGHNTGDEILRKVSQAFYDNVRSSDYVFRYGGDEFIIVLTEASENETLRTAERIRSRVEKTKLKAANGEDIALSLSIGAAMFNGHPDYERLIQIADEALYIAKRRGRNRVELWKASL</sequence>
<name>DOSC_SHIBS</name>
<organism>
    <name type="scientific">Shigella boydii serotype 4 (strain Sb227)</name>
    <dbReference type="NCBI Taxonomy" id="300268"/>
    <lineage>
        <taxon>Bacteria</taxon>
        <taxon>Pseudomonadati</taxon>
        <taxon>Pseudomonadota</taxon>
        <taxon>Gammaproteobacteria</taxon>
        <taxon>Enterobacterales</taxon>
        <taxon>Enterobacteriaceae</taxon>
        <taxon>Shigella</taxon>
    </lineage>
</organism>